<dbReference type="EC" id="1.11.1.21" evidence="1"/>
<dbReference type="EMBL" id="CP001048">
    <property type="protein sequence ID" value="ACC87830.1"/>
    <property type="molecule type" value="Genomic_DNA"/>
</dbReference>
<dbReference type="RefSeq" id="WP_002209433.1">
    <property type="nucleotide sequence ID" value="NZ_CP009780.1"/>
</dbReference>
<dbReference type="SMR" id="B2K5B9"/>
<dbReference type="GeneID" id="57975390"/>
<dbReference type="KEGG" id="ypb:YPTS_0846"/>
<dbReference type="PATRIC" id="fig|502801.10.peg.180"/>
<dbReference type="GO" id="GO:0005829">
    <property type="term" value="C:cytosol"/>
    <property type="evidence" value="ECO:0007669"/>
    <property type="project" value="TreeGrafter"/>
</dbReference>
<dbReference type="GO" id="GO:0004096">
    <property type="term" value="F:catalase activity"/>
    <property type="evidence" value="ECO:0007669"/>
    <property type="project" value="UniProtKB-UniRule"/>
</dbReference>
<dbReference type="GO" id="GO:0020037">
    <property type="term" value="F:heme binding"/>
    <property type="evidence" value="ECO:0007669"/>
    <property type="project" value="InterPro"/>
</dbReference>
<dbReference type="GO" id="GO:0046872">
    <property type="term" value="F:metal ion binding"/>
    <property type="evidence" value="ECO:0007669"/>
    <property type="project" value="UniProtKB-KW"/>
</dbReference>
<dbReference type="GO" id="GO:0070301">
    <property type="term" value="P:cellular response to hydrogen peroxide"/>
    <property type="evidence" value="ECO:0007669"/>
    <property type="project" value="TreeGrafter"/>
</dbReference>
<dbReference type="GO" id="GO:0042744">
    <property type="term" value="P:hydrogen peroxide catabolic process"/>
    <property type="evidence" value="ECO:0007669"/>
    <property type="project" value="UniProtKB-KW"/>
</dbReference>
<dbReference type="CDD" id="cd00649">
    <property type="entry name" value="catalase_peroxidase_1"/>
    <property type="match status" value="1"/>
</dbReference>
<dbReference type="CDD" id="cd08200">
    <property type="entry name" value="catalase_peroxidase_2"/>
    <property type="match status" value="1"/>
</dbReference>
<dbReference type="FunFam" id="1.10.420.10:FF:000002">
    <property type="entry name" value="Catalase-peroxidase"/>
    <property type="match status" value="1"/>
</dbReference>
<dbReference type="FunFam" id="1.10.420.10:FF:000004">
    <property type="entry name" value="Catalase-peroxidase"/>
    <property type="match status" value="1"/>
</dbReference>
<dbReference type="FunFam" id="1.10.520.10:FF:000002">
    <property type="entry name" value="Catalase-peroxidase"/>
    <property type="match status" value="1"/>
</dbReference>
<dbReference type="Gene3D" id="1.10.520.10">
    <property type="match status" value="2"/>
</dbReference>
<dbReference type="Gene3D" id="1.10.420.10">
    <property type="entry name" value="Peroxidase, domain 2"/>
    <property type="match status" value="2"/>
</dbReference>
<dbReference type="HAMAP" id="MF_01961">
    <property type="entry name" value="Catal_peroxid"/>
    <property type="match status" value="1"/>
</dbReference>
<dbReference type="InterPro" id="IPR000763">
    <property type="entry name" value="Catalase_peroxidase"/>
</dbReference>
<dbReference type="InterPro" id="IPR002016">
    <property type="entry name" value="Haem_peroxidase"/>
</dbReference>
<dbReference type="InterPro" id="IPR010255">
    <property type="entry name" value="Haem_peroxidase_sf"/>
</dbReference>
<dbReference type="InterPro" id="IPR019794">
    <property type="entry name" value="Peroxidases_AS"/>
</dbReference>
<dbReference type="InterPro" id="IPR019793">
    <property type="entry name" value="Peroxidases_heam-ligand_BS"/>
</dbReference>
<dbReference type="NCBIfam" id="TIGR00198">
    <property type="entry name" value="cat_per_HPI"/>
    <property type="match status" value="1"/>
</dbReference>
<dbReference type="NCBIfam" id="NF011635">
    <property type="entry name" value="PRK15061.1"/>
    <property type="match status" value="1"/>
</dbReference>
<dbReference type="PANTHER" id="PTHR30555:SF0">
    <property type="entry name" value="CATALASE-PEROXIDASE"/>
    <property type="match status" value="1"/>
</dbReference>
<dbReference type="PANTHER" id="PTHR30555">
    <property type="entry name" value="HYDROPEROXIDASE I, BIFUNCTIONAL CATALASE-PEROXIDASE"/>
    <property type="match status" value="1"/>
</dbReference>
<dbReference type="Pfam" id="PF00141">
    <property type="entry name" value="peroxidase"/>
    <property type="match status" value="2"/>
</dbReference>
<dbReference type="PRINTS" id="PR00460">
    <property type="entry name" value="BPEROXIDASE"/>
</dbReference>
<dbReference type="PRINTS" id="PR00458">
    <property type="entry name" value="PEROXIDASE"/>
</dbReference>
<dbReference type="SUPFAM" id="SSF48113">
    <property type="entry name" value="Heme-dependent peroxidases"/>
    <property type="match status" value="2"/>
</dbReference>
<dbReference type="PROSITE" id="PS00435">
    <property type="entry name" value="PEROXIDASE_1"/>
    <property type="match status" value="1"/>
</dbReference>
<dbReference type="PROSITE" id="PS00436">
    <property type="entry name" value="PEROXIDASE_2"/>
    <property type="match status" value="1"/>
</dbReference>
<dbReference type="PROSITE" id="PS50873">
    <property type="entry name" value="PEROXIDASE_4"/>
    <property type="match status" value="1"/>
</dbReference>
<reference key="1">
    <citation type="submission" date="2008-04" db="EMBL/GenBank/DDBJ databases">
        <title>Complete sequence of Yersinia pseudotuberculosis PB1/+.</title>
        <authorList>
            <person name="Copeland A."/>
            <person name="Lucas S."/>
            <person name="Lapidus A."/>
            <person name="Glavina del Rio T."/>
            <person name="Dalin E."/>
            <person name="Tice H."/>
            <person name="Bruce D."/>
            <person name="Goodwin L."/>
            <person name="Pitluck S."/>
            <person name="Munk A.C."/>
            <person name="Brettin T."/>
            <person name="Detter J.C."/>
            <person name="Han C."/>
            <person name="Tapia R."/>
            <person name="Schmutz J."/>
            <person name="Larimer F."/>
            <person name="Land M."/>
            <person name="Hauser L."/>
            <person name="Challacombe J.F."/>
            <person name="Green L."/>
            <person name="Lindler L.E."/>
            <person name="Nikolich M.P."/>
            <person name="Richardson P."/>
        </authorList>
    </citation>
    <scope>NUCLEOTIDE SEQUENCE [LARGE SCALE GENOMIC DNA]</scope>
    <source>
        <strain>PB1/+</strain>
    </source>
</reference>
<comment type="function">
    <text evidence="1">Bifunctional enzyme with both catalase and broad-spectrum peroxidase activity.</text>
</comment>
<comment type="catalytic activity">
    <reaction evidence="1">
        <text>H2O2 + AH2 = A + 2 H2O</text>
        <dbReference type="Rhea" id="RHEA:30275"/>
        <dbReference type="ChEBI" id="CHEBI:13193"/>
        <dbReference type="ChEBI" id="CHEBI:15377"/>
        <dbReference type="ChEBI" id="CHEBI:16240"/>
        <dbReference type="ChEBI" id="CHEBI:17499"/>
        <dbReference type="EC" id="1.11.1.21"/>
    </reaction>
</comment>
<comment type="catalytic activity">
    <reaction evidence="1">
        <text>2 H2O2 = O2 + 2 H2O</text>
        <dbReference type="Rhea" id="RHEA:20309"/>
        <dbReference type="ChEBI" id="CHEBI:15377"/>
        <dbReference type="ChEBI" id="CHEBI:15379"/>
        <dbReference type="ChEBI" id="CHEBI:16240"/>
        <dbReference type="EC" id="1.11.1.21"/>
    </reaction>
</comment>
<comment type="cofactor">
    <cofactor evidence="1">
        <name>heme b</name>
        <dbReference type="ChEBI" id="CHEBI:60344"/>
    </cofactor>
    <text evidence="1">Binds 1 heme b (iron(II)-protoporphyrin IX) group per dimer.</text>
</comment>
<comment type="subunit">
    <text evidence="1">Homodimer or homotetramer.</text>
</comment>
<comment type="PTM">
    <text evidence="1">Formation of the three residue Trp-Tyr-Met cross-link is important for the catalase, but not the peroxidase activity of the enzyme.</text>
</comment>
<comment type="similarity">
    <text evidence="1">Belongs to the peroxidase family. Peroxidase/catalase subfamily.</text>
</comment>
<proteinExistence type="inferred from homology"/>
<keyword id="KW-0349">Heme</keyword>
<keyword id="KW-0376">Hydrogen peroxide</keyword>
<keyword id="KW-0408">Iron</keyword>
<keyword id="KW-0479">Metal-binding</keyword>
<keyword id="KW-0560">Oxidoreductase</keyword>
<keyword id="KW-0575">Peroxidase</keyword>
<keyword id="KW-0732">Signal</keyword>
<gene>
    <name evidence="1" type="primary">katG</name>
    <name type="ordered locus">YPTS_0846</name>
</gene>
<evidence type="ECO:0000255" key="1">
    <source>
        <dbReference type="HAMAP-Rule" id="MF_01961"/>
    </source>
</evidence>
<name>KATG_YERPB</name>
<protein>
    <recommendedName>
        <fullName evidence="1">Catalase-peroxidase</fullName>
        <shortName evidence="1">CP</shortName>
        <ecNumber evidence="1">1.11.1.21</ecNumber>
    </recommendedName>
    <alternativeName>
        <fullName evidence="1">Peroxidase/catalase</fullName>
    </alternativeName>
</protein>
<feature type="signal peptide" evidence="1">
    <location>
        <begin position="1"/>
        <end position="23"/>
    </location>
</feature>
<feature type="chain" id="PRO_5000345675" description="Catalase-peroxidase">
    <location>
        <begin position="24"/>
        <end position="737"/>
    </location>
</feature>
<feature type="active site" description="Proton acceptor" evidence="1">
    <location>
        <position position="103"/>
    </location>
</feature>
<feature type="binding site" description="axial binding residue" evidence="1">
    <location>
        <position position="264"/>
    </location>
    <ligand>
        <name>heme b</name>
        <dbReference type="ChEBI" id="CHEBI:60344"/>
    </ligand>
    <ligandPart>
        <name>Fe</name>
        <dbReference type="ChEBI" id="CHEBI:18248"/>
    </ligandPart>
</feature>
<feature type="site" description="Transition state stabilizer" evidence="1">
    <location>
        <position position="99"/>
    </location>
</feature>
<feature type="cross-link" description="Tryptophyl-tyrosyl-methioninium (Trp-Tyr) (with M-249)" evidence="1">
    <location>
        <begin position="102"/>
        <end position="223"/>
    </location>
</feature>
<feature type="cross-link" description="Tryptophyl-tyrosyl-methioninium (Tyr-Met) (with W-102)" evidence="1">
    <location>
        <begin position="223"/>
        <end position="249"/>
    </location>
</feature>
<organism>
    <name type="scientific">Yersinia pseudotuberculosis serotype IB (strain PB1/+)</name>
    <dbReference type="NCBI Taxonomy" id="502801"/>
    <lineage>
        <taxon>Bacteria</taxon>
        <taxon>Pseudomonadati</taxon>
        <taxon>Pseudomonadota</taxon>
        <taxon>Gammaproteobacteria</taxon>
        <taxon>Enterobacterales</taxon>
        <taxon>Yersiniaceae</taxon>
        <taxon>Yersinia</taxon>
    </lineage>
</organism>
<accession>B2K5B9</accession>
<sequence length="737" mass="81365">MLKKILPVLITLAIVHNTPTAWAAEAPKTDSFYLPKSLDLSPLRLHNIESNPYGKDFNYAQQFKTLDLEAVKKDIKTVLTTSQDWWPADYGNYGPFFIRMAWHGAGTYRIYDGRGGADGGQQRFEPLNSWPDNANLDKARRLLWPIKKKYGAKISWGDLMVLTGNVALESMGFKTLGFAGGREDDWQSDLVYWGAGNKMLSDNRDKNGKLPKPLAATQMGLIYVNPEGPNGKPDPVAAAKDIREAFARMAMNDEETVALIAGGHTFGKAHGAASPEKCLGAAPGEAGLEQQGLGWANKCGSGNGKDTITSGLEGAWTTDPTHFTMQYLSNLYKHEWVLTKSPAGAWQWKPKNAANVVPDATDPTKFHPLMMFTTDIALKVDPEYKKITTRFLENPEEFKMAFARAWFKLTHRDMGPAARYLGDEVPKETFIWQDPLPAANYKMIDSADISELKDKILKTGLSDTKLIKTAWASASTFRGTDFRGGDNGARIRLAPQKDWPVNDPAELHSVLAALMEVQNNFNKDRSDGKKVSLSDLIVLGGNAAIEDAAKKAGYSISIPFTPGRTDASQEETDVSSFAVLEPTADGFRNYYDAKRNTLSPIASLIDRANKLELTVPEMTVLIGGLRVLDVNSGGSKAGVLTNTPGQLNNNFFVNLLDMSTKWTKSPKAEGYFDGYDRKTGKLKWTASSVDLVFGSNPELRAVAEVYASDDAKEKFVHDFTKVWEKVMNLDRFDIKNN</sequence>